<keyword id="KW-0067">ATP-binding</keyword>
<keyword id="KW-0175">Coiled coil</keyword>
<keyword id="KW-0493">Microtubule</keyword>
<keyword id="KW-0505">Motor protein</keyword>
<keyword id="KW-0547">Nucleotide-binding</keyword>
<keyword id="KW-1185">Reference proteome</keyword>
<organism>
    <name type="scientific">Oryza sativa subsp. japonica</name>
    <name type="common">Rice</name>
    <dbReference type="NCBI Taxonomy" id="39947"/>
    <lineage>
        <taxon>Eukaryota</taxon>
        <taxon>Viridiplantae</taxon>
        <taxon>Streptophyta</taxon>
        <taxon>Embryophyta</taxon>
        <taxon>Tracheophyta</taxon>
        <taxon>Spermatophyta</taxon>
        <taxon>Magnoliopsida</taxon>
        <taxon>Liliopsida</taxon>
        <taxon>Poales</taxon>
        <taxon>Poaceae</taxon>
        <taxon>BOP clade</taxon>
        <taxon>Oryzoideae</taxon>
        <taxon>Oryzeae</taxon>
        <taxon>Oryzinae</taxon>
        <taxon>Oryza</taxon>
        <taxon>Oryza sativa</taxon>
    </lineage>
</organism>
<protein>
    <recommendedName>
        <fullName evidence="5">Kinesin-like protein KIN-12G</fullName>
    </recommendedName>
</protein>
<name>KN12G_ORYSJ</name>
<evidence type="ECO:0000255" key="1"/>
<evidence type="ECO:0000255" key="2">
    <source>
        <dbReference type="PROSITE-ProRule" id="PRU00283"/>
    </source>
</evidence>
<evidence type="ECO:0000256" key="3">
    <source>
        <dbReference type="SAM" id="MobiDB-lite"/>
    </source>
</evidence>
<evidence type="ECO:0000303" key="4">
    <source>
    </source>
</evidence>
<evidence type="ECO:0000305" key="5"/>
<evidence type="ECO:0000312" key="6">
    <source>
        <dbReference type="EMBL" id="AAR87264.1"/>
    </source>
</evidence>
<evidence type="ECO:0000312" key="7">
    <source>
        <dbReference type="EMBL" id="ABF98896.1"/>
    </source>
</evidence>
<evidence type="ECO:0000312" key="8">
    <source>
        <dbReference type="EMBL" id="BAH92370.1"/>
    </source>
</evidence>
<evidence type="ECO:0000312" key="9">
    <source>
        <dbReference type="EMBL" id="BAS86403.1"/>
    </source>
</evidence>
<evidence type="ECO:0000312" key="10">
    <source>
        <dbReference type="EMBL" id="EAZ28596.1"/>
    </source>
</evidence>
<gene>
    <name evidence="5" type="primary">KIN12G</name>
    <name evidence="8 9" type="ordered locus">Os03g0750200/Os03g0750300</name>
    <name evidence="7" type="ordered locus">LOC_Os03g53920</name>
    <name evidence="10" type="ORF">OsJ_12582</name>
    <name evidence="6" type="ORF">OSJNBa0047E24.25</name>
</gene>
<proteinExistence type="inferred from homology"/>
<comment type="similarity">
    <text evidence="4">Belongs to the TRAFAC class myosin-kinesin ATPase superfamily. Kinesin family. KIN-12 subfamily.</text>
</comment>
<comment type="sequence caution" evidence="5">
    <conflict type="erroneous gene model prediction">
        <sequence resource="EMBL-CDS" id="ABF98896"/>
    </conflict>
</comment>
<comment type="sequence caution" evidence="5">
    <conflict type="erroneous gene model prediction">
        <sequence resource="EMBL-CDS" id="BAH92370"/>
    </conflict>
</comment>
<comment type="sequence caution" evidence="5">
    <conflict type="erroneous gene model prediction">
        <sequence resource="EMBL-CDS" id="BAS86403"/>
    </conflict>
</comment>
<comment type="sequence caution" evidence="5">
    <conflict type="erroneous gene model prediction">
        <sequence resource="EMBL-CDS" id="EAZ28596"/>
    </conflict>
</comment>
<feature type="chain" id="PRO_0000437198" description="Kinesin-like protein KIN-12G">
    <location>
        <begin position="1"/>
        <end position="1266"/>
    </location>
</feature>
<feature type="domain" description="Kinesin motor" evidence="2">
    <location>
        <begin position="32"/>
        <end position="369"/>
    </location>
</feature>
<feature type="region of interest" description="Disordered" evidence="3">
    <location>
        <begin position="1"/>
        <end position="22"/>
    </location>
</feature>
<feature type="coiled-coil region" evidence="1">
    <location>
        <begin position="613"/>
        <end position="668"/>
    </location>
</feature>
<feature type="coiled-coil region" evidence="1">
    <location>
        <begin position="817"/>
        <end position="854"/>
    </location>
</feature>
<feature type="coiled-coil region" evidence="1">
    <location>
        <begin position="1029"/>
        <end position="1060"/>
    </location>
</feature>
<feature type="coiled-coil region" evidence="1">
    <location>
        <begin position="1084"/>
        <end position="1120"/>
    </location>
</feature>
<feature type="binding site" evidence="2">
    <location>
        <begin position="113"/>
        <end position="120"/>
    </location>
    <ligand>
        <name>ATP</name>
        <dbReference type="ChEBI" id="CHEBI:30616"/>
    </ligand>
</feature>
<accession>Q75LL2</accession>
<accession>A0A0P0W313</accession>
<accession>Q10CS8</accession>
<reference key="1">
    <citation type="journal article" date="2005" name="Genome Res.">
        <title>Sequence, annotation, and analysis of synteny between rice chromosome 3 and diverged grass species.</title>
        <authorList>
            <consortium name="The rice chromosome 3 sequencing consortium"/>
            <person name="Buell C.R."/>
            <person name="Yuan Q."/>
            <person name="Ouyang S."/>
            <person name="Liu J."/>
            <person name="Zhu W."/>
            <person name="Wang A."/>
            <person name="Maiti R."/>
            <person name="Haas B."/>
            <person name="Wortman J."/>
            <person name="Pertea M."/>
            <person name="Jones K.M."/>
            <person name="Kim M."/>
            <person name="Overton L."/>
            <person name="Tsitrin T."/>
            <person name="Fadrosh D."/>
            <person name="Bera J."/>
            <person name="Weaver B."/>
            <person name="Jin S."/>
            <person name="Johri S."/>
            <person name="Reardon M."/>
            <person name="Webb K."/>
            <person name="Hill J."/>
            <person name="Moffat K."/>
            <person name="Tallon L."/>
            <person name="Van Aken S."/>
            <person name="Lewis M."/>
            <person name="Utterback T."/>
            <person name="Feldblyum T."/>
            <person name="Zismann V."/>
            <person name="Iobst S."/>
            <person name="Hsiao J."/>
            <person name="de Vazeille A.R."/>
            <person name="Salzberg S.L."/>
            <person name="White O."/>
            <person name="Fraser C.M."/>
            <person name="Yu Y."/>
            <person name="Kim H."/>
            <person name="Rambo T."/>
            <person name="Currie J."/>
            <person name="Collura K."/>
            <person name="Kernodle-Thompson S."/>
            <person name="Wei F."/>
            <person name="Kudrna K."/>
            <person name="Ammiraju J.S.S."/>
            <person name="Luo M."/>
            <person name="Goicoechea J.L."/>
            <person name="Wing R.A."/>
            <person name="Henry D."/>
            <person name="Oates R."/>
            <person name="Palmer M."/>
            <person name="Pries G."/>
            <person name="Saski C."/>
            <person name="Simmons J."/>
            <person name="Soderlund C."/>
            <person name="Nelson W."/>
            <person name="de la Bastide M."/>
            <person name="Spiegel L."/>
            <person name="Nascimento L."/>
            <person name="Huang E."/>
            <person name="Preston R."/>
            <person name="Zutavern T."/>
            <person name="Palmer L."/>
            <person name="O'Shaughnessy A."/>
            <person name="Dike S."/>
            <person name="McCombie W.R."/>
            <person name="Minx P."/>
            <person name="Cordum H."/>
            <person name="Wilson R."/>
            <person name="Jin W."/>
            <person name="Lee H.R."/>
            <person name="Jiang J."/>
            <person name="Jackson S."/>
        </authorList>
    </citation>
    <scope>NUCLEOTIDE SEQUENCE [LARGE SCALE GENOMIC DNA]</scope>
    <source>
        <strain>cv. Nipponbare</strain>
    </source>
</reference>
<reference key="2">
    <citation type="journal article" date="2005" name="Nature">
        <title>The map-based sequence of the rice genome.</title>
        <authorList>
            <consortium name="International rice genome sequencing project (IRGSP)"/>
        </authorList>
    </citation>
    <scope>NUCLEOTIDE SEQUENCE [LARGE SCALE GENOMIC DNA]</scope>
    <source>
        <strain>cv. Nipponbare</strain>
    </source>
</reference>
<reference key="3">
    <citation type="journal article" date="2008" name="Nucleic Acids Res.">
        <title>The rice annotation project database (RAP-DB): 2008 update.</title>
        <authorList>
            <consortium name="The rice annotation project (RAP)"/>
        </authorList>
    </citation>
    <scope>GENOME REANNOTATION</scope>
    <source>
        <strain>cv. Nipponbare</strain>
    </source>
</reference>
<reference key="4">
    <citation type="journal article" date="2013" name="Rice">
        <title>Improvement of the Oryza sativa Nipponbare reference genome using next generation sequence and optical map data.</title>
        <authorList>
            <person name="Kawahara Y."/>
            <person name="de la Bastide M."/>
            <person name="Hamilton J.P."/>
            <person name="Kanamori H."/>
            <person name="McCombie W.R."/>
            <person name="Ouyang S."/>
            <person name="Schwartz D.C."/>
            <person name="Tanaka T."/>
            <person name="Wu J."/>
            <person name="Zhou S."/>
            <person name="Childs K.L."/>
            <person name="Davidson R.M."/>
            <person name="Lin H."/>
            <person name="Quesada-Ocampo L."/>
            <person name="Vaillancourt B."/>
            <person name="Sakai H."/>
            <person name="Lee S.S."/>
            <person name="Kim J."/>
            <person name="Numa H."/>
            <person name="Itoh T."/>
            <person name="Buell C.R."/>
            <person name="Matsumoto T."/>
        </authorList>
    </citation>
    <scope>GENOME REANNOTATION</scope>
    <source>
        <strain>cv. Nipponbare</strain>
    </source>
</reference>
<reference key="5">
    <citation type="journal article" date="2005" name="PLoS Biol.">
        <title>The genomes of Oryza sativa: a history of duplications.</title>
        <authorList>
            <person name="Yu J."/>
            <person name="Wang J."/>
            <person name="Lin W."/>
            <person name="Li S."/>
            <person name="Li H."/>
            <person name="Zhou J."/>
            <person name="Ni P."/>
            <person name="Dong W."/>
            <person name="Hu S."/>
            <person name="Zeng C."/>
            <person name="Zhang J."/>
            <person name="Zhang Y."/>
            <person name="Li R."/>
            <person name="Xu Z."/>
            <person name="Li S."/>
            <person name="Li X."/>
            <person name="Zheng H."/>
            <person name="Cong L."/>
            <person name="Lin L."/>
            <person name="Yin J."/>
            <person name="Geng J."/>
            <person name="Li G."/>
            <person name="Shi J."/>
            <person name="Liu J."/>
            <person name="Lv H."/>
            <person name="Li J."/>
            <person name="Wang J."/>
            <person name="Deng Y."/>
            <person name="Ran L."/>
            <person name="Shi X."/>
            <person name="Wang X."/>
            <person name="Wu Q."/>
            <person name="Li C."/>
            <person name="Ren X."/>
            <person name="Wang J."/>
            <person name="Wang X."/>
            <person name="Li D."/>
            <person name="Liu D."/>
            <person name="Zhang X."/>
            <person name="Ji Z."/>
            <person name="Zhao W."/>
            <person name="Sun Y."/>
            <person name="Zhang Z."/>
            <person name="Bao J."/>
            <person name="Han Y."/>
            <person name="Dong L."/>
            <person name="Ji J."/>
            <person name="Chen P."/>
            <person name="Wu S."/>
            <person name="Liu J."/>
            <person name="Xiao Y."/>
            <person name="Bu D."/>
            <person name="Tan J."/>
            <person name="Yang L."/>
            <person name="Ye C."/>
            <person name="Zhang J."/>
            <person name="Xu J."/>
            <person name="Zhou Y."/>
            <person name="Yu Y."/>
            <person name="Zhang B."/>
            <person name="Zhuang S."/>
            <person name="Wei H."/>
            <person name="Liu B."/>
            <person name="Lei M."/>
            <person name="Yu H."/>
            <person name="Li Y."/>
            <person name="Xu H."/>
            <person name="Wei S."/>
            <person name="He X."/>
            <person name="Fang L."/>
            <person name="Zhang Z."/>
            <person name="Zhang Y."/>
            <person name="Huang X."/>
            <person name="Su Z."/>
            <person name="Tong W."/>
            <person name="Li J."/>
            <person name="Tong Z."/>
            <person name="Li S."/>
            <person name="Ye J."/>
            <person name="Wang L."/>
            <person name="Fang L."/>
            <person name="Lei T."/>
            <person name="Chen C.-S."/>
            <person name="Chen H.-C."/>
            <person name="Xu Z."/>
            <person name="Li H."/>
            <person name="Huang H."/>
            <person name="Zhang F."/>
            <person name="Xu H."/>
            <person name="Li N."/>
            <person name="Zhao C."/>
            <person name="Li S."/>
            <person name="Dong L."/>
            <person name="Huang Y."/>
            <person name="Li L."/>
            <person name="Xi Y."/>
            <person name="Qi Q."/>
            <person name="Li W."/>
            <person name="Zhang B."/>
            <person name="Hu W."/>
            <person name="Zhang Y."/>
            <person name="Tian X."/>
            <person name="Jiao Y."/>
            <person name="Liang X."/>
            <person name="Jin J."/>
            <person name="Gao L."/>
            <person name="Zheng W."/>
            <person name="Hao B."/>
            <person name="Liu S.-M."/>
            <person name="Wang W."/>
            <person name="Yuan L."/>
            <person name="Cao M."/>
            <person name="McDermott J."/>
            <person name="Samudrala R."/>
            <person name="Wang J."/>
            <person name="Wong G.K.-S."/>
            <person name="Yang H."/>
        </authorList>
    </citation>
    <scope>NUCLEOTIDE SEQUENCE [LARGE SCALE GENOMIC DNA]</scope>
    <source>
        <strain>cv. Nipponbare</strain>
    </source>
</reference>
<reference key="6">
    <citation type="journal article" date="2009" name="Ann. Bot.">
        <title>Evaluating the microtubule cytoskeleton and its interacting proteins in monocots by mining the rice genome.</title>
        <authorList>
            <person name="Guo L."/>
            <person name="Ho C.M."/>
            <person name="Kong Z."/>
            <person name="Lee Y.R."/>
            <person name="Qian Q."/>
            <person name="Liu B."/>
        </authorList>
    </citation>
    <scope>GENE FAMILY</scope>
    <scope>NOMENCLATURE</scope>
</reference>
<dbReference type="EMBL" id="AC092556">
    <property type="protein sequence ID" value="AAR87264.1"/>
    <property type="molecule type" value="Genomic_DNA"/>
</dbReference>
<dbReference type="EMBL" id="DP000009">
    <property type="protein sequence ID" value="ABF98896.1"/>
    <property type="status" value="ALT_SEQ"/>
    <property type="molecule type" value="Genomic_DNA"/>
</dbReference>
<dbReference type="EMBL" id="AP008209">
    <property type="protein sequence ID" value="BAH92370.1"/>
    <property type="status" value="ALT_SEQ"/>
    <property type="molecule type" value="Genomic_DNA"/>
</dbReference>
<dbReference type="EMBL" id="AP014959">
    <property type="protein sequence ID" value="BAS86403.1"/>
    <property type="status" value="ALT_SEQ"/>
    <property type="molecule type" value="Genomic_DNA"/>
</dbReference>
<dbReference type="EMBL" id="CM000140">
    <property type="protein sequence ID" value="EAZ28596.1"/>
    <property type="status" value="ALT_SEQ"/>
    <property type="molecule type" value="Genomic_DNA"/>
</dbReference>
<dbReference type="SMR" id="Q75LL2"/>
<dbReference type="FunCoup" id="Q75LL2">
    <property type="interactions" value="33"/>
</dbReference>
<dbReference type="STRING" id="39947.Q75LL2"/>
<dbReference type="PaxDb" id="39947-Q75LL2"/>
<dbReference type="GeneID" id="9269802"/>
<dbReference type="KEGG" id="dosa:Os03g0750200"/>
<dbReference type="KEGG" id="osa:9269802"/>
<dbReference type="eggNOG" id="KOG4280">
    <property type="taxonomic scope" value="Eukaryota"/>
</dbReference>
<dbReference type="HOGENOM" id="CLU_005600_0_0_1"/>
<dbReference type="InParanoid" id="Q75LL2"/>
<dbReference type="OrthoDB" id="3176171at2759"/>
<dbReference type="Proteomes" id="UP000000763">
    <property type="component" value="Chromosome 3"/>
</dbReference>
<dbReference type="Proteomes" id="UP000007752">
    <property type="component" value="Chromosome 3"/>
</dbReference>
<dbReference type="Proteomes" id="UP000059680">
    <property type="component" value="Chromosome 3"/>
</dbReference>
<dbReference type="GO" id="GO:0005874">
    <property type="term" value="C:microtubule"/>
    <property type="evidence" value="ECO:0007669"/>
    <property type="project" value="UniProtKB-KW"/>
</dbReference>
<dbReference type="GO" id="GO:0005819">
    <property type="term" value="C:spindle"/>
    <property type="evidence" value="ECO:0000318"/>
    <property type="project" value="GO_Central"/>
</dbReference>
<dbReference type="GO" id="GO:0005524">
    <property type="term" value="F:ATP binding"/>
    <property type="evidence" value="ECO:0007669"/>
    <property type="project" value="UniProtKB-KW"/>
</dbReference>
<dbReference type="GO" id="GO:0008017">
    <property type="term" value="F:microtubule binding"/>
    <property type="evidence" value="ECO:0007669"/>
    <property type="project" value="InterPro"/>
</dbReference>
<dbReference type="GO" id="GO:0003777">
    <property type="term" value="F:microtubule motor activity"/>
    <property type="evidence" value="ECO:0007669"/>
    <property type="project" value="InterPro"/>
</dbReference>
<dbReference type="GO" id="GO:0007018">
    <property type="term" value="P:microtubule-based movement"/>
    <property type="evidence" value="ECO:0007669"/>
    <property type="project" value="InterPro"/>
</dbReference>
<dbReference type="GO" id="GO:0051225">
    <property type="term" value="P:spindle assembly"/>
    <property type="evidence" value="ECO:0000318"/>
    <property type="project" value="GO_Central"/>
</dbReference>
<dbReference type="FunFam" id="3.40.850.10:FF:000033">
    <property type="entry name" value="Kinesin-like protein KIN-12E"/>
    <property type="match status" value="1"/>
</dbReference>
<dbReference type="Gene3D" id="3.40.850.10">
    <property type="entry name" value="Kinesin motor domain"/>
    <property type="match status" value="1"/>
</dbReference>
<dbReference type="InterPro" id="IPR044986">
    <property type="entry name" value="KIF15/KIN-12"/>
</dbReference>
<dbReference type="InterPro" id="IPR019821">
    <property type="entry name" value="Kinesin_motor_CS"/>
</dbReference>
<dbReference type="InterPro" id="IPR001752">
    <property type="entry name" value="Kinesin_motor_dom"/>
</dbReference>
<dbReference type="InterPro" id="IPR036961">
    <property type="entry name" value="Kinesin_motor_dom_sf"/>
</dbReference>
<dbReference type="InterPro" id="IPR027417">
    <property type="entry name" value="P-loop_NTPase"/>
</dbReference>
<dbReference type="PANTHER" id="PTHR37739">
    <property type="entry name" value="KINESIN-LIKE PROTEIN KIN-12D"/>
    <property type="match status" value="1"/>
</dbReference>
<dbReference type="PANTHER" id="PTHR37739:SF14">
    <property type="entry name" value="KINESIN-LIKE PROTEIN KIN-12E"/>
    <property type="match status" value="1"/>
</dbReference>
<dbReference type="Pfam" id="PF00225">
    <property type="entry name" value="Kinesin"/>
    <property type="match status" value="1"/>
</dbReference>
<dbReference type="PRINTS" id="PR00380">
    <property type="entry name" value="KINESINHEAVY"/>
</dbReference>
<dbReference type="SMART" id="SM00129">
    <property type="entry name" value="KISc"/>
    <property type="match status" value="1"/>
</dbReference>
<dbReference type="SUPFAM" id="SSF52540">
    <property type="entry name" value="P-loop containing nucleoside triphosphate hydrolases"/>
    <property type="match status" value="1"/>
</dbReference>
<dbReference type="PROSITE" id="PS00411">
    <property type="entry name" value="KINESIN_MOTOR_1"/>
    <property type="match status" value="1"/>
</dbReference>
<dbReference type="PROSITE" id="PS50067">
    <property type="entry name" value="KINESIN_MOTOR_2"/>
    <property type="match status" value="1"/>
</dbReference>
<sequence>MPSDCGDDDHGGGSAPAGFELQEDPSFWKDNNVQVVIRVRPLSSGEISVQGQKRCVRQDSCQSITWTGHPESRFKFDLVADEYVTQENLFKVAGVPMVDNCMAGYNSCMFAYGQTGSGKTHTMLGDIENGTRRNNVNCGMTPRVFEHLFLRIQKEKEIRKEEKLRFTCKCSFLEIYNEQILDLLNPNSVNLQIREDAKKGVHVENLTEHEVSNAREAMQQLVEGAANRKVAATNMNRASSRSHSVFTCLIESKWESQGINHHRFSRLNLVDLAGSERQKSSGAEGERLKEATNINKSLSTLGLVITNLIAVSNKKSHHVPYRDSKLTFLLQDSLGGNSKTTIIANISPSSCCAAETLSTLKFAQRAKYIRNNAIINEDASGDVLSMRLQIQHLKKEVSRLQGLVNSDKAECTSSSGFICESPSTLKWNQGQGSFSPLMFDKRAMQRKDYDAALVAAFRREQETEAKLKAMIAAKLVAEQLATQRAEEVRSFKMRLRFREDRIKRLEQVTSGKLSAESHLLQENEDLVKEVDALRGLLDRNPEVTRFAMENLQLKEDIRRLQTFVDEGEREMMHEQIIVLQDKLLEALDWKLMHEKDPINKDLSFLGESADEEMEFIRLQAIQNEREIESLRKNLSFCLESKEKLERRVDELTLELEAAKKYHEESEAVELQVQTEVDLHDLPDAQTELKTLVDAIATASQREAEAHETAIGLAKANEELRTRLTVLIEDNKRLVELYEHAIANGEVNQDGGHPAIPQIEGVNEQQSSHSYGGAAANGVLPDDKPESATILPADNSSSEVSDSKIMDGQCNHKDNFSRSELTDLQLQLDEMHEENDKLMGLYEKAMQERDEFKRKFFEGSNSLTTVDTQYEDVEMRDATDDEDLEVKHVHDSAISTFKEILRLVRVKLKNVHDKLVTTQDAVEYFKLLEMASTKAEELSASIQHHCLELKHDQEDMNALKAELSQSQESKEALESKYFSPVASCWNLDLKTKALVGSKFDVSLELLNQKKEQLSHLQTLKKEFSVASTKARESETALRSKIDGLKVKLRSFEAQRKEAERVLFAIDNIDTSTPTLSKPVNFGKASELLRSEEERTKLLSELKKSREQLIMVQKEIKSMNRHDDIDCKIASLESEVENCCLTLLEADVEKFVRDNTLTEIWKEEQKDMDCLLVDYQECVFKVNLKEEKIRACEESLQHQTRSLDDMNSKLNQAMRDLGEHLRDRTPCDLDASMLHVSDKVKGDLDAMALHVAEAVQLLLVQGENQTNP</sequence>